<accession>Q57790</accession>
<organism>
    <name type="scientific">Methanocaldococcus jannaschii (strain ATCC 43067 / DSM 2661 / JAL-1 / JCM 10045 / NBRC 100440)</name>
    <name type="common">Methanococcus jannaschii</name>
    <dbReference type="NCBI Taxonomy" id="243232"/>
    <lineage>
        <taxon>Archaea</taxon>
        <taxon>Methanobacteriati</taxon>
        <taxon>Methanobacteriota</taxon>
        <taxon>Methanomada group</taxon>
        <taxon>Methanococci</taxon>
        <taxon>Methanococcales</taxon>
        <taxon>Methanocaldococcaceae</taxon>
        <taxon>Methanocaldococcus</taxon>
    </lineage>
</organism>
<name>Y344_METJA</name>
<dbReference type="EMBL" id="L77117">
    <property type="protein sequence ID" value="AAB98334.1"/>
    <property type="molecule type" value="Genomic_DNA"/>
</dbReference>
<dbReference type="PIR" id="H64342">
    <property type="entry name" value="H64342"/>
</dbReference>
<dbReference type="RefSeq" id="WP_010869842.1">
    <property type="nucleotide sequence ID" value="NC_000909.1"/>
</dbReference>
<dbReference type="STRING" id="243232.MJ_0344"/>
<dbReference type="PaxDb" id="243232-MJ_0344"/>
<dbReference type="EnsemblBacteria" id="AAB98334">
    <property type="protein sequence ID" value="AAB98334"/>
    <property type="gene ID" value="MJ_0344"/>
</dbReference>
<dbReference type="GeneID" id="1451200"/>
<dbReference type="KEGG" id="mja:MJ_0344"/>
<dbReference type="eggNOG" id="arCOG09648">
    <property type="taxonomic scope" value="Archaea"/>
</dbReference>
<dbReference type="HOGENOM" id="CLU_1492986_0_0_2"/>
<dbReference type="InParanoid" id="Q57790"/>
<dbReference type="OrthoDB" id="385128at2157"/>
<dbReference type="Proteomes" id="UP000000805">
    <property type="component" value="Chromosome"/>
</dbReference>
<feature type="chain" id="PRO_0000106814" description="Uncharacterized protein MJ0344">
    <location>
        <begin position="1"/>
        <end position="180"/>
    </location>
</feature>
<keyword id="KW-1185">Reference proteome</keyword>
<gene>
    <name type="ordered locus">MJ0344</name>
</gene>
<protein>
    <recommendedName>
        <fullName>Uncharacterized protein MJ0344</fullName>
    </recommendedName>
</protein>
<reference key="1">
    <citation type="journal article" date="1996" name="Science">
        <title>Complete genome sequence of the methanogenic archaeon, Methanococcus jannaschii.</title>
        <authorList>
            <person name="Bult C.J."/>
            <person name="White O."/>
            <person name="Olsen G.J."/>
            <person name="Zhou L."/>
            <person name="Fleischmann R.D."/>
            <person name="Sutton G.G."/>
            <person name="Blake J.A."/>
            <person name="FitzGerald L.M."/>
            <person name="Clayton R.A."/>
            <person name="Gocayne J.D."/>
            <person name="Kerlavage A.R."/>
            <person name="Dougherty B.A."/>
            <person name="Tomb J.-F."/>
            <person name="Adams M.D."/>
            <person name="Reich C.I."/>
            <person name="Overbeek R."/>
            <person name="Kirkness E.F."/>
            <person name="Weinstock K.G."/>
            <person name="Merrick J.M."/>
            <person name="Glodek A."/>
            <person name="Scott J.L."/>
            <person name="Geoghagen N.S.M."/>
            <person name="Weidman J.F."/>
            <person name="Fuhrmann J.L."/>
            <person name="Nguyen D."/>
            <person name="Utterback T.R."/>
            <person name="Kelley J.M."/>
            <person name="Peterson J.D."/>
            <person name="Sadow P.W."/>
            <person name="Hanna M.C."/>
            <person name="Cotton M.D."/>
            <person name="Roberts K.M."/>
            <person name="Hurst M.A."/>
            <person name="Kaine B.P."/>
            <person name="Borodovsky M."/>
            <person name="Klenk H.-P."/>
            <person name="Fraser C.M."/>
            <person name="Smith H.O."/>
            <person name="Woese C.R."/>
            <person name="Venter J.C."/>
        </authorList>
    </citation>
    <scope>NUCLEOTIDE SEQUENCE [LARGE SCALE GENOMIC DNA]</scope>
    <source>
        <strain>ATCC 43067 / DSM 2661 / JAL-1 / JCM 10045 / NBRC 100440</strain>
    </source>
</reference>
<sequence>MAVLASSTEPEPTESLLQQTNELLIIGKGAIVYKEFTTGVDARIIDSQTIGIGIPFNYYPFMCMVLDDAGNGIPMQEFTSAPGSLTVKVAATLDSTKTYKIIAFLIGDSMKIITSIQSQSGTVTEIAPGFGIFKVIYNDTEGTDTLTINYDDGTSETITVDKSNLWTVLPMQLPDAERVA</sequence>
<proteinExistence type="predicted"/>